<organism>
    <name type="scientific">Solieria filiformis</name>
    <name type="common">Red alga</name>
    <name type="synonym">Euhymenia filiformis</name>
    <dbReference type="NCBI Taxonomy" id="31449"/>
    <lineage>
        <taxon>Eukaryota</taxon>
        <taxon>Rhodophyta</taxon>
        <taxon>Florideophyceae</taxon>
        <taxon>Rhodymeniophycidae</taxon>
        <taxon>Gigartinales</taxon>
        <taxon>Solieriaceae</taxon>
        <taxon>Solieria</taxon>
    </lineage>
</organism>
<sequence length="267" mass="27999">GRYTVQNQWGGSSAPWNDAGVFVLGGRANQNVMAIDVSSSDGGKTLTGTMTYSGEGPIGFKGTRRGESNNYEVENQWGGSSAPWHPAGTFVIGSRSGQAVVAMNVTSHDGGKTLSGHMTYENEGPIGFKGTQAEGDTYNVENQWGGSSAPWNKAGVWALGSRASQGVVKLDVSSSDGGKTLTGTMQYQNEGPIGFRGTLTGANNYKAENQWGGSSGAWNPAGLWLIGDRHNQNIIGVKVTSDDNGKTLEGTCTYYREGPIGFKGVAN</sequence>
<accession>C0HL90</accession>
<dbReference type="SMR" id="C0HL90"/>
<dbReference type="GO" id="GO:0005537">
    <property type="term" value="F:D-mannose binding"/>
    <property type="evidence" value="ECO:0007669"/>
    <property type="project" value="UniProtKB-KW"/>
</dbReference>
<dbReference type="Gene3D" id="2.40.128.450">
    <property type="match status" value="2"/>
</dbReference>
<dbReference type="InterPro" id="IPR053726">
    <property type="entry name" value="Bacterial_Lectin_Domain_sf"/>
</dbReference>
<dbReference type="InterPro" id="IPR040964">
    <property type="entry name" value="SBD"/>
</dbReference>
<dbReference type="Pfam" id="PF17882">
    <property type="entry name" value="SBD"/>
    <property type="match status" value="4"/>
</dbReference>
<reference evidence="4" key="1">
    <citation type="journal article" date="2018" name="Int. J. Biol. Macromol.">
        <title>Structural characterization of two isolectins from the marine red alga Solieria filiformis (Kuetzing) P.W. Gabrielson and their anticancer effect on MCF-7 breast cancer cells.</title>
        <authorList>
            <person name="Chaves R.P."/>
            <person name="Silva S.R.D."/>
            <person name="Nascimento Neto L.G."/>
            <person name="Carneiro R.F."/>
            <person name="Silva A.L.C.D."/>
            <person name="Sampaio A.H."/>
            <person name="Sousa B.L."/>
            <person name="Cabral M.G."/>
            <person name="Videira P.A."/>
            <person name="Teixeira E.H."/>
            <person name="Nagano C.S."/>
        </authorList>
    </citation>
    <scope>NUCLEOTIDE SEQUENCE [MRNA]</scope>
    <scope>PROTEIN SEQUENCE OF 1-12</scope>
    <scope>MASS SPECTROMETRY</scope>
    <scope>IDENTIFICATION BY MASS SPECTROMETRY</scope>
</reference>
<comment type="function">
    <text evidence="1">Lectin specific for high mannose N-glycans, recognizes the branched moiety of these glycans. Does not recognize other types of N-glycans or monosaccharides.</text>
</comment>
<comment type="subunit">
    <text evidence="2">Monomer.</text>
</comment>
<comment type="mass spectrometry" mass="27988.0" method="Electrospray" evidence="2"/>
<comment type="similarity">
    <text evidence="4">Belongs to the bacterial lectin family.</text>
</comment>
<protein>
    <recommendedName>
        <fullName evidence="3">Lectin SfL-2</fullName>
    </recommendedName>
</protein>
<keyword id="KW-0903">Direct protein sequencing</keyword>
<keyword id="KW-0430">Lectin</keyword>
<keyword id="KW-0465">Mannose-binding</keyword>
<keyword id="KW-0677">Repeat</keyword>
<name>LEC2_SOLFI</name>
<feature type="chain" id="PRO_0000444013" description="Lectin SfL-2" evidence="4">
    <location>
        <begin position="1"/>
        <end position="267"/>
    </location>
</feature>
<feature type="repeat" description="1" evidence="3">
    <location>
        <begin position="1"/>
        <end position="67"/>
    </location>
</feature>
<feature type="repeat" description="2" evidence="3">
    <location>
        <begin position="68"/>
        <end position="135"/>
    </location>
</feature>
<feature type="repeat" description="3" evidence="3">
    <location>
        <begin position="136"/>
        <end position="202"/>
    </location>
</feature>
<feature type="repeat" description="4" evidence="3">
    <location>
        <begin position="203"/>
        <end position="267"/>
    </location>
</feature>
<feature type="region of interest" description="4 X approximate tandem repeats" evidence="3">
    <location>
        <begin position="1"/>
        <end position="267"/>
    </location>
</feature>
<proteinExistence type="evidence at protein level"/>
<evidence type="ECO:0000250" key="1">
    <source>
        <dbReference type="UniProtKB" id="P84331"/>
    </source>
</evidence>
<evidence type="ECO:0000269" key="2">
    <source>
    </source>
</evidence>
<evidence type="ECO:0000303" key="3">
    <source>
    </source>
</evidence>
<evidence type="ECO:0000305" key="4"/>